<reference key="1">
    <citation type="submission" date="2013-04" db="EMBL/GenBank/DDBJ databases">
        <title>The Genome Sequence of Bilophila wadsworthia 3_1_6.</title>
        <authorList>
            <consortium name="The Broad Institute Genomics Platform"/>
            <person name="Earl A."/>
            <person name="Ward D."/>
            <person name="Feldgarden M."/>
            <person name="Gevers D."/>
            <person name="Sibley C."/>
            <person name="Strauss J."/>
            <person name="Allen-Vercoe E."/>
            <person name="Walker B."/>
            <person name="Young S."/>
            <person name="Zeng Q."/>
            <person name="Gargeya S."/>
            <person name="Fitzgerald M."/>
            <person name="Haas B."/>
            <person name="Abouelleil A."/>
            <person name="Allen A.W."/>
            <person name="Alvarado L."/>
            <person name="Arachchi H.M."/>
            <person name="Berlin A.M."/>
            <person name="Chapman S.B."/>
            <person name="Gainer-Dewar J."/>
            <person name="Goldberg J."/>
            <person name="Griggs A."/>
            <person name="Gujja S."/>
            <person name="Hansen M."/>
            <person name="Howarth C."/>
            <person name="Imamovic A."/>
            <person name="Ireland A."/>
            <person name="Larimer J."/>
            <person name="McCowan C."/>
            <person name="Murphy C."/>
            <person name="Pearson M."/>
            <person name="Poon T.W."/>
            <person name="Priest M."/>
            <person name="Roberts A."/>
            <person name="Saif S."/>
            <person name="Shea T."/>
            <person name="Sisk P."/>
            <person name="Sykes S."/>
            <person name="Wortman J."/>
            <person name="Nusbaum C."/>
            <person name="Birren B."/>
        </authorList>
    </citation>
    <scope>NUCLEOTIDE SEQUENCE [LARGE SCALE GENOMIC DNA]</scope>
    <source>
        <strain>3_1_6</strain>
    </source>
</reference>
<reference key="2">
    <citation type="journal article" date="2019" name="Nat. Commun.">
        <title>Radical-mediated C-S bond cleavage in C2 sulfonate degradation by anaerobic bacteria.</title>
        <authorList>
            <person name="Xing M."/>
            <person name="Wei Y."/>
            <person name="Zhou Y."/>
            <person name="Zhang J."/>
            <person name="Lin L."/>
            <person name="Hu Y."/>
            <person name="Hua G."/>
            <person name="Urs A.N.N."/>
            <person name="Liu D."/>
            <person name="Wang F."/>
            <person name="Guo C."/>
            <person name="Tong Y."/>
            <person name="Li M."/>
            <person name="Liu Y."/>
            <person name="Ang E.L."/>
            <person name="Zhao H."/>
            <person name="Yuchi Z."/>
            <person name="Zhang Y."/>
        </authorList>
    </citation>
    <scope>FUNCTION</scope>
    <scope>CATALYTIC ACTIVITY</scope>
    <scope>INDUCTION BY TAURINE</scope>
    <scope>PATHWAY</scope>
</reference>
<reference key="3">
    <citation type="journal article" date="2019" name="Proc. Natl. Acad. Sci. U.S.A.">
        <title>A glycyl radical enzyme enables hydrogen sulfide production by the human intestinal bacterium Bilophila wadsworthia.</title>
        <authorList>
            <person name="Peck S.C."/>
            <person name="Denger K."/>
            <person name="Burrichter A."/>
            <person name="Irwin S.M."/>
            <person name="Balskus E.P."/>
            <person name="Schleheck D."/>
        </authorList>
    </citation>
    <scope>FUNCTION</scope>
    <scope>CATALYTIC ACTIVITY</scope>
    <scope>BIOPHYSICOCHEMICAL PROPERTIES</scope>
    <scope>INDUCTION BY TAURINE</scope>
    <scope>PATHWAY</scope>
    <source>
        <strain>3_1_6</strain>
    </source>
</reference>
<accession>E5Y946</accession>
<dbReference type="EC" id="1.1.1.433" evidence="1 2"/>
<dbReference type="EMBL" id="ADCP02000001">
    <property type="protein sequence ID" value="EFV43471.1"/>
    <property type="molecule type" value="Genomic_DNA"/>
</dbReference>
<dbReference type="RefSeq" id="WP_005028754.1">
    <property type="nucleotide sequence ID" value="NZ_KE150238.1"/>
</dbReference>
<dbReference type="SMR" id="E5Y946"/>
<dbReference type="STRING" id="563192.HMPREF0179_02714"/>
<dbReference type="GeneID" id="78084891"/>
<dbReference type="KEGG" id="ag:EFV43471"/>
<dbReference type="eggNOG" id="COG1454">
    <property type="taxonomic scope" value="Bacteria"/>
</dbReference>
<dbReference type="HOGENOM" id="CLU_007207_0_0_7"/>
<dbReference type="OrthoDB" id="9778433at2"/>
<dbReference type="BioCyc" id="MetaCyc:MONOMER-20850"/>
<dbReference type="UniPathway" id="UPA00338"/>
<dbReference type="Proteomes" id="UP000006034">
    <property type="component" value="Unassembled WGS sequence"/>
</dbReference>
<dbReference type="GO" id="GO:0004022">
    <property type="term" value="F:alcohol dehydrogenase (NAD+) activity"/>
    <property type="evidence" value="ECO:0007669"/>
    <property type="project" value="TreeGrafter"/>
</dbReference>
<dbReference type="GO" id="GO:0046872">
    <property type="term" value="F:metal ion binding"/>
    <property type="evidence" value="ECO:0007669"/>
    <property type="project" value="InterPro"/>
</dbReference>
<dbReference type="GO" id="GO:0046306">
    <property type="term" value="P:alkanesulfonate catabolic process"/>
    <property type="evidence" value="ECO:0007669"/>
    <property type="project" value="UniProtKB-UniPathway"/>
</dbReference>
<dbReference type="CDD" id="cd08551">
    <property type="entry name" value="Fe-ADH"/>
    <property type="match status" value="1"/>
</dbReference>
<dbReference type="FunFam" id="3.40.50.1970:FF:000003">
    <property type="entry name" value="Alcohol dehydrogenase, iron-containing"/>
    <property type="match status" value="1"/>
</dbReference>
<dbReference type="Gene3D" id="3.40.50.1970">
    <property type="match status" value="1"/>
</dbReference>
<dbReference type="Gene3D" id="1.20.1090.10">
    <property type="entry name" value="Dehydroquinate synthase-like - alpha domain"/>
    <property type="match status" value="1"/>
</dbReference>
<dbReference type="InterPro" id="IPR001670">
    <property type="entry name" value="ADH_Fe/GldA"/>
</dbReference>
<dbReference type="InterPro" id="IPR056798">
    <property type="entry name" value="ADH_Fe_C"/>
</dbReference>
<dbReference type="InterPro" id="IPR018211">
    <property type="entry name" value="ADH_Fe_CS"/>
</dbReference>
<dbReference type="InterPro" id="IPR039697">
    <property type="entry name" value="Alcohol_dehydrogenase_Fe"/>
</dbReference>
<dbReference type="PANTHER" id="PTHR11496">
    <property type="entry name" value="ALCOHOL DEHYDROGENASE"/>
    <property type="match status" value="1"/>
</dbReference>
<dbReference type="PANTHER" id="PTHR11496:SF83">
    <property type="entry name" value="HYDROXYACID-OXOACID TRANSHYDROGENASE, MITOCHONDRIAL"/>
    <property type="match status" value="1"/>
</dbReference>
<dbReference type="Pfam" id="PF25137">
    <property type="entry name" value="ADH_Fe_C"/>
    <property type="match status" value="1"/>
</dbReference>
<dbReference type="Pfam" id="PF00465">
    <property type="entry name" value="Fe-ADH"/>
    <property type="match status" value="1"/>
</dbReference>
<dbReference type="SUPFAM" id="SSF56796">
    <property type="entry name" value="Dehydroquinate synthase-like"/>
    <property type="match status" value="1"/>
</dbReference>
<dbReference type="PROSITE" id="PS00913">
    <property type="entry name" value="ADH_IRON_1"/>
    <property type="match status" value="1"/>
</dbReference>
<name>SARD_BILW3</name>
<protein>
    <recommendedName>
        <fullName evidence="3">Sulfoacetaldehyde reductase</fullName>
        <ecNumber evidence="1 2">1.1.1.433</ecNumber>
    </recommendedName>
</protein>
<keyword id="KW-0520">NAD</keyword>
<keyword id="KW-0560">Oxidoreductase</keyword>
<keyword id="KW-1185">Reference proteome</keyword>
<evidence type="ECO:0000269" key="1">
    <source>
    </source>
</evidence>
<evidence type="ECO:0000269" key="2">
    <source>
    </source>
</evidence>
<evidence type="ECO:0000303" key="3">
    <source>
    </source>
</evidence>
<evidence type="ECO:0000303" key="4">
    <source>
    </source>
</evidence>
<evidence type="ECO:0000305" key="5"/>
<evidence type="ECO:0000305" key="6">
    <source>
    </source>
</evidence>
<evidence type="ECO:0000312" key="7">
    <source>
        <dbReference type="EMBL" id="EFV43471.1"/>
    </source>
</evidence>
<feature type="chain" id="PRO_0000450950" description="Sulfoacetaldehyde reductase">
    <location>
        <begin position="1"/>
        <end position="387"/>
    </location>
</feature>
<organism>
    <name type="scientific">Bilophila wadsworthia (strain 3_1_6)</name>
    <dbReference type="NCBI Taxonomy" id="563192"/>
    <lineage>
        <taxon>Bacteria</taxon>
        <taxon>Pseudomonadati</taxon>
        <taxon>Thermodesulfobacteriota</taxon>
        <taxon>Desulfovibrionia</taxon>
        <taxon>Desulfovibrionales</taxon>
        <taxon>Desulfovibrionaceae</taxon>
        <taxon>Bilophila</taxon>
    </lineage>
</organism>
<gene>
    <name evidence="3" type="primary">sarD</name>
    <name evidence="4" type="synonym">tauF</name>
    <name evidence="7" type="ORF">HMPREF0179_02714</name>
</gene>
<sequence>MAFVHYTVKKIVHGLGAIKEAANEVKNLKGSKAFIVTDPGLAKIGVQKPLEEALTAGGIEWKLYAEAQLEPSMDSIQHCTDEAKAFGADVIIGFGGGSALDTTKAASVLLSNEGPIDKYFGINLVPNPSLPCILIPTTSGTGSEMTNISVLADTKNGGKKGVVSEYMYADTVILDAELTFGLPPRVTAMTGVDAFVHAMESFCGIAATPITDALNLQAMKLVGANIRQAYANGKNAAARDAMMYASALAGMGFGNTQNGIIHAIGTTLPVECHIPHGLAMSFCAPFSVGFNYIANPEKYAIVADILRGDDRSGCMSVMDRAADVEDAFRDLLNDLDIATGLSNYGVKREDLPACADRAFAAKRLLNNNPRAASRDQILALLEANFEA</sequence>
<proteinExistence type="evidence at protein level"/>
<comment type="function">
    <text evidence="1 2">Involved in an anaerobic respiration pathway that converts the sulfonate taurine (2-aminoethanesulfonate) to ammonia, acetate and sulfide. Catalyzes the NADH-dependent reduction of sulfoacetaldehyde to 2-hydroxyethane-1-sulfonate (isethionate). Does not accept acetaldehyde as a substrate.</text>
</comment>
<comment type="catalytic activity">
    <reaction evidence="1 2">
        <text>2-hydroxyethane-1-sulfonate + NAD(+) = sulfoacetaldehyde + NADH + H(+)</text>
        <dbReference type="Rhea" id="RHEA:64516"/>
        <dbReference type="ChEBI" id="CHEBI:15378"/>
        <dbReference type="ChEBI" id="CHEBI:57540"/>
        <dbReference type="ChEBI" id="CHEBI:57945"/>
        <dbReference type="ChEBI" id="CHEBI:58246"/>
        <dbReference type="ChEBI" id="CHEBI:61904"/>
        <dbReference type="EC" id="1.1.1.433"/>
    </reaction>
    <physiologicalReaction direction="left-to-right" evidence="1 2">
        <dbReference type="Rhea" id="RHEA:64517"/>
    </physiologicalReaction>
</comment>
<comment type="biophysicochemical properties">
    <kinetics>
        <KM evidence="1">0.51 mM for sulfoacetaldehyde</KM>
        <Vmax evidence="1">351.0 nmol/min/mg enzyme</Vmax>
    </kinetics>
</comment>
<comment type="pathway">
    <text evidence="1 2">Organosulfur degradation; alkanesulfonate degradation.</text>
</comment>
<comment type="induction">
    <text evidence="1 2">Up-regulated in the presence of taurine.</text>
</comment>
<comment type="miscellaneous">
    <text evidence="1">In contrast to some members of the family, a metal cofactor is not required for catalytic activity.</text>
</comment>
<comment type="miscellaneous">
    <text evidence="6">Taurine is an abundant dietary and host-derived molecule whose metabolism to hydrogen sulfide (H2S) by members of the human gut microbiota has many prominent connections to host health and disease. The human gut bacterium and opportunistic pathogen Bilophila wadsworthia produces H2S when respiring sulfite (HSO3-) released from organosulfonate substrates such as taurine and isethionate.</text>
</comment>
<comment type="similarity">
    <text evidence="5">Belongs to the iron-containing alcohol dehydrogenase family.</text>
</comment>